<protein>
    <recommendedName>
        <fullName>Delayed minus-nitrogen induction protein 2</fullName>
    </recommendedName>
</protein>
<dbReference type="EMBL" id="CU329671">
    <property type="protein sequence ID" value="CAB58400.1"/>
    <property type="molecule type" value="Genomic_DNA"/>
</dbReference>
<dbReference type="PIR" id="T40415">
    <property type="entry name" value="T40415"/>
</dbReference>
<dbReference type="RefSeq" id="NP_595474.1">
    <property type="nucleotide sequence ID" value="NM_001021385.1"/>
</dbReference>
<dbReference type="BioGRID" id="277256">
    <property type="interactions" value="10"/>
</dbReference>
<dbReference type="STRING" id="284812.Q9USS9"/>
<dbReference type="PaxDb" id="4896-SPBC4.01.1"/>
<dbReference type="EnsemblFungi" id="SPBC4.01.1">
    <property type="protein sequence ID" value="SPBC4.01.1:pep"/>
    <property type="gene ID" value="SPBC4.01"/>
</dbReference>
<dbReference type="GeneID" id="2540733"/>
<dbReference type="KEGG" id="spo:2540733"/>
<dbReference type="PomBase" id="SPBC4.01">
    <property type="gene designation" value="dni2"/>
</dbReference>
<dbReference type="VEuPathDB" id="FungiDB:SPBC4.01"/>
<dbReference type="HOGENOM" id="CLU_1195471_0_0_1"/>
<dbReference type="InParanoid" id="Q9USS9"/>
<dbReference type="OMA" id="WTIERNK"/>
<dbReference type="PRO" id="PR:Q9USS9"/>
<dbReference type="Proteomes" id="UP000002485">
    <property type="component" value="Chromosome II"/>
</dbReference>
<dbReference type="GO" id="GO:0005783">
    <property type="term" value="C:endoplasmic reticulum"/>
    <property type="evidence" value="ECO:0000314"/>
    <property type="project" value="PomBase"/>
</dbReference>
<dbReference type="GO" id="GO:0043332">
    <property type="term" value="C:mating projection tip"/>
    <property type="evidence" value="ECO:0000314"/>
    <property type="project" value="PomBase"/>
</dbReference>
<dbReference type="GO" id="GO:0070867">
    <property type="term" value="C:mating projection tip membrane"/>
    <property type="evidence" value="ECO:0000314"/>
    <property type="project" value="PomBase"/>
</dbReference>
<dbReference type="GO" id="GO:0032220">
    <property type="term" value="P:plasma membrane fusion involved in cytogamy"/>
    <property type="evidence" value="ECO:0000315"/>
    <property type="project" value="PomBase"/>
</dbReference>
<feature type="chain" id="PRO_0000304045" description="Delayed minus-nitrogen induction protein 2">
    <location>
        <begin position="1"/>
        <end position="248"/>
    </location>
</feature>
<feature type="transmembrane region" description="Helical" evidence="1">
    <location>
        <begin position="26"/>
        <end position="46"/>
    </location>
</feature>
<feature type="transmembrane region" description="Helical" evidence="1">
    <location>
        <begin position="110"/>
        <end position="130"/>
    </location>
</feature>
<feature type="transmembrane region" description="Helical" evidence="1">
    <location>
        <begin position="144"/>
        <end position="164"/>
    </location>
</feature>
<feature type="transmembrane region" description="Helical" evidence="1">
    <location>
        <begin position="186"/>
        <end position="206"/>
    </location>
</feature>
<evidence type="ECO:0000255" key="1"/>
<evidence type="ECO:0000269" key="2">
    <source>
    </source>
</evidence>
<evidence type="ECO:0000305" key="3"/>
<organism>
    <name type="scientific">Schizosaccharomyces pombe (strain 972 / ATCC 24843)</name>
    <name type="common">Fission yeast</name>
    <dbReference type="NCBI Taxonomy" id="284812"/>
    <lineage>
        <taxon>Eukaryota</taxon>
        <taxon>Fungi</taxon>
        <taxon>Dikarya</taxon>
        <taxon>Ascomycota</taxon>
        <taxon>Taphrinomycotina</taxon>
        <taxon>Schizosaccharomycetes</taxon>
        <taxon>Schizosaccharomycetales</taxon>
        <taxon>Schizosaccharomycetaceae</taxon>
        <taxon>Schizosaccharomyces</taxon>
    </lineage>
</organism>
<comment type="subcellular location">
    <subcellularLocation>
        <location evidence="3">Membrane</location>
        <topology evidence="3">Multi-pass membrane protein</topology>
    </subcellularLocation>
</comment>
<comment type="induction">
    <text evidence="2">Expressed during meiosis and in response to nitrogen deprivation.</text>
</comment>
<comment type="similarity">
    <text evidence="3">Belongs to the SUR7 family.</text>
</comment>
<reference key="1">
    <citation type="journal article" date="2002" name="Nature">
        <title>The genome sequence of Schizosaccharomyces pombe.</title>
        <authorList>
            <person name="Wood V."/>
            <person name="Gwilliam R."/>
            <person name="Rajandream M.A."/>
            <person name="Lyne M.H."/>
            <person name="Lyne R."/>
            <person name="Stewart A."/>
            <person name="Sgouros J.G."/>
            <person name="Peat N."/>
            <person name="Hayles J."/>
            <person name="Baker S.G."/>
            <person name="Basham D."/>
            <person name="Bowman S."/>
            <person name="Brooks K."/>
            <person name="Brown D."/>
            <person name="Brown S."/>
            <person name="Chillingworth T."/>
            <person name="Churcher C.M."/>
            <person name="Collins M."/>
            <person name="Connor R."/>
            <person name="Cronin A."/>
            <person name="Davis P."/>
            <person name="Feltwell T."/>
            <person name="Fraser A."/>
            <person name="Gentles S."/>
            <person name="Goble A."/>
            <person name="Hamlin N."/>
            <person name="Harris D.E."/>
            <person name="Hidalgo J."/>
            <person name="Hodgson G."/>
            <person name="Holroyd S."/>
            <person name="Hornsby T."/>
            <person name="Howarth S."/>
            <person name="Huckle E.J."/>
            <person name="Hunt S."/>
            <person name="Jagels K."/>
            <person name="James K.D."/>
            <person name="Jones L."/>
            <person name="Jones M."/>
            <person name="Leather S."/>
            <person name="McDonald S."/>
            <person name="McLean J."/>
            <person name="Mooney P."/>
            <person name="Moule S."/>
            <person name="Mungall K.L."/>
            <person name="Murphy L.D."/>
            <person name="Niblett D."/>
            <person name="Odell C."/>
            <person name="Oliver K."/>
            <person name="O'Neil S."/>
            <person name="Pearson D."/>
            <person name="Quail M.A."/>
            <person name="Rabbinowitsch E."/>
            <person name="Rutherford K.M."/>
            <person name="Rutter S."/>
            <person name="Saunders D."/>
            <person name="Seeger K."/>
            <person name="Sharp S."/>
            <person name="Skelton J."/>
            <person name="Simmonds M.N."/>
            <person name="Squares R."/>
            <person name="Squares S."/>
            <person name="Stevens K."/>
            <person name="Taylor K."/>
            <person name="Taylor R.G."/>
            <person name="Tivey A."/>
            <person name="Walsh S.V."/>
            <person name="Warren T."/>
            <person name="Whitehead S."/>
            <person name="Woodward J.R."/>
            <person name="Volckaert G."/>
            <person name="Aert R."/>
            <person name="Robben J."/>
            <person name="Grymonprez B."/>
            <person name="Weltjens I."/>
            <person name="Vanstreels E."/>
            <person name="Rieger M."/>
            <person name="Schaefer M."/>
            <person name="Mueller-Auer S."/>
            <person name="Gabel C."/>
            <person name="Fuchs M."/>
            <person name="Duesterhoeft A."/>
            <person name="Fritzc C."/>
            <person name="Holzer E."/>
            <person name="Moestl D."/>
            <person name="Hilbert H."/>
            <person name="Borzym K."/>
            <person name="Langer I."/>
            <person name="Beck A."/>
            <person name="Lehrach H."/>
            <person name="Reinhardt R."/>
            <person name="Pohl T.M."/>
            <person name="Eger P."/>
            <person name="Zimmermann W."/>
            <person name="Wedler H."/>
            <person name="Wambutt R."/>
            <person name="Purnelle B."/>
            <person name="Goffeau A."/>
            <person name="Cadieu E."/>
            <person name="Dreano S."/>
            <person name="Gloux S."/>
            <person name="Lelaure V."/>
            <person name="Mottier S."/>
            <person name="Galibert F."/>
            <person name="Aves S.J."/>
            <person name="Xiang Z."/>
            <person name="Hunt C."/>
            <person name="Moore K."/>
            <person name="Hurst S.M."/>
            <person name="Lucas M."/>
            <person name="Rochet M."/>
            <person name="Gaillardin C."/>
            <person name="Tallada V.A."/>
            <person name="Garzon A."/>
            <person name="Thode G."/>
            <person name="Daga R.R."/>
            <person name="Cruzado L."/>
            <person name="Jimenez J."/>
            <person name="Sanchez M."/>
            <person name="del Rey F."/>
            <person name="Benito J."/>
            <person name="Dominguez A."/>
            <person name="Revuelta J.L."/>
            <person name="Moreno S."/>
            <person name="Armstrong J."/>
            <person name="Forsburg S.L."/>
            <person name="Cerutti L."/>
            <person name="Lowe T."/>
            <person name="McCombie W.R."/>
            <person name="Paulsen I."/>
            <person name="Potashkin J."/>
            <person name="Shpakovski G.V."/>
            <person name="Ussery D."/>
            <person name="Barrell B.G."/>
            <person name="Nurse P."/>
        </authorList>
    </citation>
    <scope>NUCLEOTIDE SEQUENCE [LARGE SCALE GENOMIC DNA]</scope>
    <source>
        <strain>972 / ATCC 24843</strain>
    </source>
</reference>
<reference key="2">
    <citation type="journal article" date="2002" name="Nat. Genet.">
        <title>The transcriptional program of meiosis and sporulation in fission yeast.</title>
        <authorList>
            <person name="Mata J."/>
            <person name="Lyne R."/>
            <person name="Burns G."/>
            <person name="Baehler J."/>
        </authorList>
    </citation>
    <scope>INDUCTION</scope>
</reference>
<name>DNI2_SCHPO</name>
<sequence>MERGTSKFSWIGLVARIYNYIPHPSIFSNAILGIAWLFLIFLCCSCLTKSSIFARLLRVKNETTTVDVGFFGVCDQAINSTSRVCHELRNWDQTTGGLAYETSRFAWLQVHPVLLAIVVVFSTLSIVLTILKYLAPAYIRQWSISCLTTSTAACLLLALQMALAHISANSYAVGMNLTGKATAKFGVAAAVFGWISSGFFLLFSLIHLGLWTIERNKQKLFEETSLSFSFITTKLRLIETQYFICKDY</sequence>
<keyword id="KW-0472">Membrane</keyword>
<keyword id="KW-1185">Reference proteome</keyword>
<keyword id="KW-0812">Transmembrane</keyword>
<keyword id="KW-1133">Transmembrane helix</keyword>
<proteinExistence type="evidence at transcript level"/>
<accession>Q9USS9</accession>
<gene>
    <name type="primary">dni2</name>
    <name type="ORF">SPBC4.01</name>
</gene>